<reference key="1">
    <citation type="journal article" date="2009" name="PLoS ONE">
        <title>Salmonella paratyphi C: genetic divergence from Salmonella choleraesuis and pathogenic convergence with Salmonella typhi.</title>
        <authorList>
            <person name="Liu W.-Q."/>
            <person name="Feng Y."/>
            <person name="Wang Y."/>
            <person name="Zou Q.-H."/>
            <person name="Chen F."/>
            <person name="Guo J.-T."/>
            <person name="Peng Y.-H."/>
            <person name="Jin Y."/>
            <person name="Li Y.-G."/>
            <person name="Hu S.-N."/>
            <person name="Johnston R.N."/>
            <person name="Liu G.-R."/>
            <person name="Liu S.-L."/>
        </authorList>
    </citation>
    <scope>NUCLEOTIDE SEQUENCE [LARGE SCALE GENOMIC DNA]</scope>
    <source>
        <strain>RKS4594</strain>
    </source>
</reference>
<proteinExistence type="inferred from homology"/>
<evidence type="ECO:0000255" key="1">
    <source>
        <dbReference type="HAMAP-Rule" id="MF_00255"/>
    </source>
</evidence>
<accession>C0Q1B6</accession>
<organism>
    <name type="scientific">Salmonella paratyphi C (strain RKS4594)</name>
    <dbReference type="NCBI Taxonomy" id="476213"/>
    <lineage>
        <taxon>Bacteria</taxon>
        <taxon>Pseudomonadati</taxon>
        <taxon>Pseudomonadota</taxon>
        <taxon>Gammaproteobacteria</taxon>
        <taxon>Enterobacterales</taxon>
        <taxon>Enterobacteriaceae</taxon>
        <taxon>Salmonella</taxon>
    </lineage>
</organism>
<keyword id="KW-0030">Aminoacyl-tRNA synthetase</keyword>
<keyword id="KW-0067">ATP-binding</keyword>
<keyword id="KW-0963">Cytoplasm</keyword>
<keyword id="KW-0436">Ligase</keyword>
<keyword id="KW-0547">Nucleotide-binding</keyword>
<keyword id="KW-0648">Protein biosynthesis</keyword>
<gene>
    <name evidence="1" type="primary">glyS</name>
    <name type="ordered locus">SPC_3734</name>
</gene>
<comment type="catalytic activity">
    <reaction evidence="1">
        <text>tRNA(Gly) + glycine + ATP = glycyl-tRNA(Gly) + AMP + diphosphate</text>
        <dbReference type="Rhea" id="RHEA:16013"/>
        <dbReference type="Rhea" id="RHEA-COMP:9664"/>
        <dbReference type="Rhea" id="RHEA-COMP:9683"/>
        <dbReference type="ChEBI" id="CHEBI:30616"/>
        <dbReference type="ChEBI" id="CHEBI:33019"/>
        <dbReference type="ChEBI" id="CHEBI:57305"/>
        <dbReference type="ChEBI" id="CHEBI:78442"/>
        <dbReference type="ChEBI" id="CHEBI:78522"/>
        <dbReference type="ChEBI" id="CHEBI:456215"/>
        <dbReference type="EC" id="6.1.1.14"/>
    </reaction>
</comment>
<comment type="subunit">
    <text evidence="1">Tetramer of two alpha and two beta subunits.</text>
</comment>
<comment type="subcellular location">
    <subcellularLocation>
        <location evidence="1">Cytoplasm</location>
    </subcellularLocation>
</comment>
<comment type="similarity">
    <text evidence="1">Belongs to the class-II aminoacyl-tRNA synthetase family.</text>
</comment>
<name>SYGB_SALPC</name>
<feature type="chain" id="PRO_1000197213" description="Glycine--tRNA ligase beta subunit">
    <location>
        <begin position="1"/>
        <end position="689"/>
    </location>
</feature>
<protein>
    <recommendedName>
        <fullName evidence="1">Glycine--tRNA ligase beta subunit</fullName>
        <ecNumber evidence="1">6.1.1.14</ecNumber>
    </recommendedName>
    <alternativeName>
        <fullName evidence="1">Glycyl-tRNA synthetase beta subunit</fullName>
        <shortName evidence="1">GlyRS</shortName>
    </alternativeName>
</protein>
<dbReference type="EC" id="6.1.1.14" evidence="1"/>
<dbReference type="EMBL" id="CP000857">
    <property type="protein sequence ID" value="ACN47812.1"/>
    <property type="molecule type" value="Genomic_DNA"/>
</dbReference>
<dbReference type="RefSeq" id="WP_001291737.1">
    <property type="nucleotide sequence ID" value="NC_012125.1"/>
</dbReference>
<dbReference type="SMR" id="C0Q1B6"/>
<dbReference type="KEGG" id="sei:SPC_3734"/>
<dbReference type="HOGENOM" id="CLU_007220_2_2_6"/>
<dbReference type="Proteomes" id="UP000001599">
    <property type="component" value="Chromosome"/>
</dbReference>
<dbReference type="GO" id="GO:0005829">
    <property type="term" value="C:cytosol"/>
    <property type="evidence" value="ECO:0007669"/>
    <property type="project" value="TreeGrafter"/>
</dbReference>
<dbReference type="GO" id="GO:0004814">
    <property type="term" value="F:arginine-tRNA ligase activity"/>
    <property type="evidence" value="ECO:0007669"/>
    <property type="project" value="InterPro"/>
</dbReference>
<dbReference type="GO" id="GO:0005524">
    <property type="term" value="F:ATP binding"/>
    <property type="evidence" value="ECO:0007669"/>
    <property type="project" value="UniProtKB-UniRule"/>
</dbReference>
<dbReference type="GO" id="GO:0004820">
    <property type="term" value="F:glycine-tRNA ligase activity"/>
    <property type="evidence" value="ECO:0007669"/>
    <property type="project" value="UniProtKB-UniRule"/>
</dbReference>
<dbReference type="GO" id="GO:0006420">
    <property type="term" value="P:arginyl-tRNA aminoacylation"/>
    <property type="evidence" value="ECO:0007669"/>
    <property type="project" value="InterPro"/>
</dbReference>
<dbReference type="GO" id="GO:0006426">
    <property type="term" value="P:glycyl-tRNA aminoacylation"/>
    <property type="evidence" value="ECO:0007669"/>
    <property type="project" value="UniProtKB-UniRule"/>
</dbReference>
<dbReference type="HAMAP" id="MF_00255">
    <property type="entry name" value="Gly_tRNA_synth_beta"/>
    <property type="match status" value="1"/>
</dbReference>
<dbReference type="InterPro" id="IPR008909">
    <property type="entry name" value="DALR_anticod-bd"/>
</dbReference>
<dbReference type="InterPro" id="IPR015944">
    <property type="entry name" value="Gly-tRNA-synth_bsu"/>
</dbReference>
<dbReference type="InterPro" id="IPR006194">
    <property type="entry name" value="Gly-tRNA-synth_heterodimer"/>
</dbReference>
<dbReference type="NCBIfam" id="TIGR00211">
    <property type="entry name" value="glyS"/>
    <property type="match status" value="1"/>
</dbReference>
<dbReference type="PANTHER" id="PTHR30075:SF2">
    <property type="entry name" value="GLYCINE--TRNA LIGASE, CHLOROPLASTIC_MITOCHONDRIAL 2"/>
    <property type="match status" value="1"/>
</dbReference>
<dbReference type="PANTHER" id="PTHR30075">
    <property type="entry name" value="GLYCYL-TRNA SYNTHETASE"/>
    <property type="match status" value="1"/>
</dbReference>
<dbReference type="Pfam" id="PF05746">
    <property type="entry name" value="DALR_1"/>
    <property type="match status" value="1"/>
</dbReference>
<dbReference type="Pfam" id="PF02092">
    <property type="entry name" value="tRNA_synt_2f"/>
    <property type="match status" value="1"/>
</dbReference>
<dbReference type="PRINTS" id="PR01045">
    <property type="entry name" value="TRNASYNTHGB"/>
</dbReference>
<dbReference type="SUPFAM" id="SSF109604">
    <property type="entry name" value="HD-domain/PDEase-like"/>
    <property type="match status" value="1"/>
</dbReference>
<dbReference type="PROSITE" id="PS50861">
    <property type="entry name" value="AA_TRNA_LIGASE_II_GLYAB"/>
    <property type="match status" value="1"/>
</dbReference>
<sequence>MSEKTFLVEIGTEELPPKALRSLAESFAANFTAELDNAGLAHGNVEWFAAPRRLALKVANLAESQPDREVEKRGPAIAQAFDAEGKPSKAAEGWARGCGITVDQAERLKTDKGEWLLYRAHVKGESTEALVPNMVATSLAKLPIPKLMRWGASDVHFVRPVHTVTLLLGDKVIPATILGIQSDRVIRGHRFMGEPEFTIDNADQYPQILLERGKVIADYEARKAKIKADAEEAARKIGGNADLSESLLEEVASLVEWPVVLTAKFEEKFLAVPAEALVYTMKGDQKYFPVYDNAGKLLPNFIFVANIESKDPTQIISGNEKVVRPRLADAEFFFNTDRKKRLEDHLPRLQTVLFQQQLGTLRDKTDRIQALAGWIAGQIGADVNHATRAGLLSKCDLMTNMVFEFTDTQGVMGMHYARHDGEAEDVAVALNEQYQPRFAGDDLPSNPVACALAIADKMDTLAGIFGIGQHPKGDKDPFALRRAALGVLRIIVEKNLALDLQTLTEEAVRLYGDKLTNANVVDDVIDFMLGRFRAWYQDEGYTVDTIQAVLARRPTRPADFDARMKAVSHFRTLEEASALAAANKRVSNILAKATEPLNDIVHASVLKEAAEIELARHLVVLRDKLQPYFADGRYQEALIELAALRAPVDEFFENVMVNAKEKDIRINRLTLLSKLRELFLQVADISLLQ</sequence>